<reference key="1">
    <citation type="journal article" date="2008" name="Appl. Environ. Microbiol.">
        <title>The genome of Polaromonas sp. strain JS666: insights into the evolution of a hydrocarbon- and xenobiotic-degrading bacterium, and features of relevance to biotechnology.</title>
        <authorList>
            <person name="Mattes T.E."/>
            <person name="Alexander A.K."/>
            <person name="Richardson P.M."/>
            <person name="Munk A.C."/>
            <person name="Han C.S."/>
            <person name="Stothard P."/>
            <person name="Coleman N.V."/>
        </authorList>
    </citation>
    <scope>NUCLEOTIDE SEQUENCE [LARGE SCALE GENOMIC DNA]</scope>
    <source>
        <strain>JS666 / ATCC BAA-500</strain>
    </source>
</reference>
<organism>
    <name type="scientific">Polaromonas sp. (strain JS666 / ATCC BAA-500)</name>
    <dbReference type="NCBI Taxonomy" id="296591"/>
    <lineage>
        <taxon>Bacteria</taxon>
        <taxon>Pseudomonadati</taxon>
        <taxon>Pseudomonadota</taxon>
        <taxon>Betaproteobacteria</taxon>
        <taxon>Burkholderiales</taxon>
        <taxon>Comamonadaceae</taxon>
        <taxon>Polaromonas</taxon>
    </lineage>
</organism>
<dbReference type="EC" id="2.7.8.7" evidence="1"/>
<dbReference type="EMBL" id="CP000316">
    <property type="protein sequence ID" value="ABE45535.1"/>
    <property type="molecule type" value="Genomic_DNA"/>
</dbReference>
<dbReference type="RefSeq" id="WP_011484527.1">
    <property type="nucleotide sequence ID" value="NC_007948.1"/>
</dbReference>
<dbReference type="SMR" id="Q126K7"/>
<dbReference type="STRING" id="296591.Bpro_3631"/>
<dbReference type="KEGG" id="pol:Bpro_3631"/>
<dbReference type="eggNOG" id="COG0736">
    <property type="taxonomic scope" value="Bacteria"/>
</dbReference>
<dbReference type="HOGENOM" id="CLU_089696_3_1_4"/>
<dbReference type="OrthoDB" id="517356at2"/>
<dbReference type="Proteomes" id="UP000001983">
    <property type="component" value="Chromosome"/>
</dbReference>
<dbReference type="GO" id="GO:0005737">
    <property type="term" value="C:cytoplasm"/>
    <property type="evidence" value="ECO:0007669"/>
    <property type="project" value="UniProtKB-SubCell"/>
</dbReference>
<dbReference type="GO" id="GO:0008897">
    <property type="term" value="F:holo-[acyl-carrier-protein] synthase activity"/>
    <property type="evidence" value="ECO:0007669"/>
    <property type="project" value="UniProtKB-UniRule"/>
</dbReference>
<dbReference type="GO" id="GO:0000287">
    <property type="term" value="F:magnesium ion binding"/>
    <property type="evidence" value="ECO:0007669"/>
    <property type="project" value="UniProtKB-UniRule"/>
</dbReference>
<dbReference type="GO" id="GO:0006633">
    <property type="term" value="P:fatty acid biosynthetic process"/>
    <property type="evidence" value="ECO:0007669"/>
    <property type="project" value="UniProtKB-UniRule"/>
</dbReference>
<dbReference type="Gene3D" id="3.90.470.20">
    <property type="entry name" value="4'-phosphopantetheinyl transferase domain"/>
    <property type="match status" value="1"/>
</dbReference>
<dbReference type="HAMAP" id="MF_00101">
    <property type="entry name" value="AcpS"/>
    <property type="match status" value="1"/>
</dbReference>
<dbReference type="InterPro" id="IPR008278">
    <property type="entry name" value="4-PPantetheinyl_Trfase_dom"/>
</dbReference>
<dbReference type="InterPro" id="IPR037143">
    <property type="entry name" value="4-PPantetheinyl_Trfase_dom_sf"/>
</dbReference>
<dbReference type="InterPro" id="IPR002582">
    <property type="entry name" value="ACPS"/>
</dbReference>
<dbReference type="InterPro" id="IPR004568">
    <property type="entry name" value="Ppantetheine-prot_Trfase_dom"/>
</dbReference>
<dbReference type="NCBIfam" id="TIGR00516">
    <property type="entry name" value="acpS"/>
    <property type="match status" value="1"/>
</dbReference>
<dbReference type="NCBIfam" id="TIGR00556">
    <property type="entry name" value="pantethn_trn"/>
    <property type="match status" value="1"/>
</dbReference>
<dbReference type="Pfam" id="PF01648">
    <property type="entry name" value="ACPS"/>
    <property type="match status" value="1"/>
</dbReference>
<dbReference type="SUPFAM" id="SSF56214">
    <property type="entry name" value="4'-phosphopantetheinyl transferase"/>
    <property type="match status" value="1"/>
</dbReference>
<feature type="chain" id="PRO_1000075649" description="Holo-[acyl-carrier-protein] synthase">
    <location>
        <begin position="1"/>
        <end position="132"/>
    </location>
</feature>
<feature type="binding site" evidence="1">
    <location>
        <position position="8"/>
    </location>
    <ligand>
        <name>Mg(2+)</name>
        <dbReference type="ChEBI" id="CHEBI:18420"/>
    </ligand>
</feature>
<feature type="binding site" evidence="1">
    <location>
        <position position="62"/>
    </location>
    <ligand>
        <name>Mg(2+)</name>
        <dbReference type="ChEBI" id="CHEBI:18420"/>
    </ligand>
</feature>
<name>ACPS_POLSJ</name>
<proteinExistence type="inferred from homology"/>
<gene>
    <name evidence="1" type="primary">acpS</name>
    <name type="ordered locus">Bpro_3631</name>
</gene>
<sequence length="132" mass="15158">MIYGVGTDICDVRRIRASLERHGERLAQKILSEAELATWKERSERWPDRGVRYLATRFSAKEAFSKAIGLGMRMPMTWRHCEISKAASGKPEIVLHGPLKDWFETRQLSVHVSVTDENEYAASFCVVEKNDF</sequence>
<keyword id="KW-0963">Cytoplasm</keyword>
<keyword id="KW-0275">Fatty acid biosynthesis</keyword>
<keyword id="KW-0276">Fatty acid metabolism</keyword>
<keyword id="KW-0444">Lipid biosynthesis</keyword>
<keyword id="KW-0443">Lipid metabolism</keyword>
<keyword id="KW-0460">Magnesium</keyword>
<keyword id="KW-0479">Metal-binding</keyword>
<keyword id="KW-1185">Reference proteome</keyword>
<keyword id="KW-0808">Transferase</keyword>
<comment type="function">
    <text evidence="1">Transfers the 4'-phosphopantetheine moiety from coenzyme A to a Ser of acyl-carrier-protein.</text>
</comment>
<comment type="catalytic activity">
    <reaction evidence="1">
        <text>apo-[ACP] + CoA = holo-[ACP] + adenosine 3',5'-bisphosphate + H(+)</text>
        <dbReference type="Rhea" id="RHEA:12068"/>
        <dbReference type="Rhea" id="RHEA-COMP:9685"/>
        <dbReference type="Rhea" id="RHEA-COMP:9690"/>
        <dbReference type="ChEBI" id="CHEBI:15378"/>
        <dbReference type="ChEBI" id="CHEBI:29999"/>
        <dbReference type="ChEBI" id="CHEBI:57287"/>
        <dbReference type="ChEBI" id="CHEBI:58343"/>
        <dbReference type="ChEBI" id="CHEBI:64479"/>
        <dbReference type="EC" id="2.7.8.7"/>
    </reaction>
</comment>
<comment type="cofactor">
    <cofactor evidence="1">
        <name>Mg(2+)</name>
        <dbReference type="ChEBI" id="CHEBI:18420"/>
    </cofactor>
</comment>
<comment type="subcellular location">
    <subcellularLocation>
        <location evidence="1">Cytoplasm</location>
    </subcellularLocation>
</comment>
<comment type="similarity">
    <text evidence="1">Belongs to the P-Pant transferase superfamily. AcpS family.</text>
</comment>
<protein>
    <recommendedName>
        <fullName evidence="1">Holo-[acyl-carrier-protein] synthase</fullName>
        <shortName evidence="1">Holo-ACP synthase</shortName>
        <ecNumber evidence="1">2.7.8.7</ecNumber>
    </recommendedName>
    <alternativeName>
        <fullName evidence="1">4'-phosphopantetheinyl transferase AcpS</fullName>
    </alternativeName>
</protein>
<accession>Q126K7</accession>
<evidence type="ECO:0000255" key="1">
    <source>
        <dbReference type="HAMAP-Rule" id="MF_00101"/>
    </source>
</evidence>